<dbReference type="EMBL" id="FJ230960">
    <property type="protein sequence ID" value="ACI91093.1"/>
    <property type="molecule type" value="Genomic_DNA"/>
</dbReference>
<dbReference type="RefSeq" id="YP_002300464.1">
    <property type="nucleotide sequence ID" value="NC_011421.1"/>
</dbReference>
<dbReference type="PDB" id="8SME">
    <property type="method" value="X-ray"/>
    <property type="resolution" value="2.36 A"/>
    <property type="chains" value="A/B=1-89"/>
</dbReference>
<dbReference type="PDB" id="8SMF">
    <property type="method" value="X-ray"/>
    <property type="resolution" value="1.75 A"/>
    <property type="chains" value="A/B/C/D/E/F/G/H=1-89"/>
</dbReference>
<dbReference type="PDB" id="8SMG">
    <property type="method" value="X-ray"/>
    <property type="resolution" value="2.10 A"/>
    <property type="chains" value="A/B=1-89"/>
</dbReference>
<dbReference type="PDB" id="8WJE">
    <property type="method" value="X-ray"/>
    <property type="resolution" value="2.27 A"/>
    <property type="chains" value="A/B/C/D/E/F=1-89"/>
</dbReference>
<dbReference type="PDBsum" id="8SME"/>
<dbReference type="PDBsum" id="8SMF"/>
<dbReference type="PDBsum" id="8SMG"/>
<dbReference type="PDBsum" id="8WJE"/>
<dbReference type="SMR" id="B6V311"/>
<dbReference type="GeneID" id="7009182"/>
<dbReference type="KEGG" id="vg:7009182"/>
<dbReference type="Proteomes" id="UP000001590">
    <property type="component" value="Genome"/>
</dbReference>
<dbReference type="GO" id="GO:0046872">
    <property type="term" value="F:metal ion binding"/>
    <property type="evidence" value="ECO:0007669"/>
    <property type="project" value="UniProtKB-KW"/>
</dbReference>
<dbReference type="InterPro" id="IPR021361">
    <property type="entry name" value="Tad2-like_dom"/>
</dbReference>
<dbReference type="Pfam" id="PF11195">
    <property type="entry name" value="Tad2-like"/>
    <property type="match status" value="1"/>
</dbReference>
<organism>
    <name type="scientific">Bacillus phage SP01</name>
    <name type="common">Bacteriophage SP01</name>
    <dbReference type="NCBI Taxonomy" id="2884427"/>
    <lineage>
        <taxon>Viruses</taxon>
        <taxon>Duplodnaviria</taxon>
        <taxon>Heunggongvirae</taxon>
        <taxon>Uroviricota</taxon>
        <taxon>Caudoviricetes</taxon>
        <taxon>Herelleviridae</taxon>
        <taxon>Spounavirinae</taxon>
        <taxon>Okubovirus</taxon>
        <taxon>Okubovirus SPO1</taxon>
    </lineage>
</organism>
<name>TAD2_BPSP1</name>
<sequence length="89" mass="10029">MKTKMSFGEALEVLKQGMQVYRSGWNGKNMFLFLKSSDALASDFGFGFGEYINEPVFGNIIFIKTADNKIHAWVPSQTDVLAEDWDIVS</sequence>
<organismHost>
    <name type="scientific">Bacillus subtilis</name>
    <dbReference type="NCBI Taxonomy" id="1423"/>
</organismHost>
<accession>B6V311</accession>
<reference key="1">
    <citation type="journal article" date="2009" name="J. Mol. Biol.">
        <title>The genome of Bacillus subtilis bacteriophage SPO1.</title>
        <authorList>
            <person name="Stewart C.R."/>
            <person name="Casjens S.R."/>
            <person name="Cresawn S.G."/>
            <person name="Houtz J.M."/>
            <person name="Smith A.L."/>
            <person name="Ford M.E."/>
            <person name="Peebles C.L."/>
            <person name="Hatfull G.F."/>
            <person name="Hendrix R.W."/>
            <person name="Huang W.M."/>
            <person name="Pedulla M.L."/>
        </authorList>
    </citation>
    <scope>NUCLEOTIDE SEQUENCE [LARGE SCALE GENOMIC DNA]</scope>
    <scope>FUNCTION</scope>
</reference>
<reference evidence="5 6" key="2">
    <citation type="journal article" date="2024" name="Nature">
        <title>Phages overcome bacterial immunity via diverse anti-defence proteins.</title>
        <authorList>
            <person name="Yirmiya E."/>
            <person name="Leavitt A."/>
            <person name="Lu A."/>
            <person name="Ragucci A.E."/>
            <person name="Avraham C."/>
            <person name="Osterman I."/>
            <person name="Garb J."/>
            <person name="Antine S.P."/>
            <person name="Mooney S.E."/>
            <person name="Hobbs S.J."/>
            <person name="Kranzusch P.J."/>
            <person name="Amitai G."/>
            <person name="Sorek R."/>
        </authorList>
    </citation>
    <scope>X-RAY CRYSTALLOGRAPHY (1.75 ANGSTROMS) IN COMPLEX WITH MAGNESIUM AND WITH 1''-3' GCADPR</scope>
    <scope>FUNCTION</scope>
    <scope>SUBUNIT</scope>
</reference>
<protein>
    <recommendedName>
        <fullName evidence="2">Thoeris anti-defense 2</fullName>
        <shortName evidence="2">Tad2</shortName>
    </recommendedName>
</protein>
<comment type="function">
    <text evidence="1 3">Counteracts the host Thoeris antiviral defense system (PubMed:37992756). Probably acts by binding and sequestering cyclic ADP-D-ribose signal molecules produced upon viral infection (3'cADPR or 2'cADPR); sequestration prevents the signal from activating the ThsA of the Thoeris antiviral defense system (Probable).</text>
</comment>
<comment type="subunit">
    <text evidence="1">Homotetramer.</text>
</comment>
<feature type="chain" id="PRO_0000460359" description="Thoeris anti-defense 2">
    <location>
        <begin position="1"/>
        <end position="89"/>
    </location>
</feature>
<feature type="binding site" evidence="1">
    <location>
        <position position="25"/>
    </location>
    <ligand>
        <name>3'cADPR</name>
        <dbReference type="ChEBI" id="CHEBI:194249"/>
    </ligand>
</feature>
<feature type="binding site" evidence="1">
    <location>
        <position position="26"/>
    </location>
    <ligand>
        <name>3'cADPR</name>
        <dbReference type="ChEBI" id="CHEBI:194249"/>
    </ligand>
</feature>
<feature type="binding site" evidence="6">
    <location>
        <position position="42"/>
    </location>
    <ligand>
        <name>Mg(2+)</name>
        <dbReference type="ChEBI" id="CHEBI:18420"/>
    </ligand>
</feature>
<feature type="binding site" evidence="1">
    <location>
        <position position="73"/>
    </location>
    <ligand>
        <name>3'cADPR</name>
        <dbReference type="ChEBI" id="CHEBI:194249"/>
    </ligand>
</feature>
<feature type="binding site" evidence="1">
    <location>
        <position position="79"/>
    </location>
    <ligand>
        <name>3'cADPR</name>
        <dbReference type="ChEBI" id="CHEBI:194249"/>
    </ligand>
</feature>
<feature type="strand" evidence="9">
    <location>
        <begin position="3"/>
        <end position="5"/>
    </location>
</feature>
<feature type="helix" evidence="8">
    <location>
        <begin position="7"/>
        <end position="14"/>
    </location>
</feature>
<feature type="turn" evidence="8">
    <location>
        <begin position="15"/>
        <end position="17"/>
    </location>
</feature>
<feature type="strand" evidence="8">
    <location>
        <begin position="20"/>
        <end position="22"/>
    </location>
</feature>
<feature type="strand" evidence="8">
    <location>
        <begin position="26"/>
        <end position="29"/>
    </location>
</feature>
<feature type="strand" evidence="8">
    <location>
        <begin position="31"/>
        <end position="35"/>
    </location>
</feature>
<feature type="helix" evidence="8">
    <location>
        <begin position="37"/>
        <end position="41"/>
    </location>
</feature>
<feature type="strand" evidence="8">
    <location>
        <begin position="47"/>
        <end position="49"/>
    </location>
</feature>
<feature type="strand" evidence="8">
    <location>
        <begin position="60"/>
        <end position="64"/>
    </location>
</feature>
<feature type="strand" evidence="7">
    <location>
        <begin position="66"/>
        <end position="68"/>
    </location>
</feature>
<feature type="strand" evidence="8">
    <location>
        <begin position="70"/>
        <end position="72"/>
    </location>
</feature>
<feature type="helix" evidence="8">
    <location>
        <begin position="77"/>
        <end position="81"/>
    </location>
</feature>
<feature type="strand" evidence="8">
    <location>
        <begin position="85"/>
        <end position="87"/>
    </location>
</feature>
<gene>
    <name evidence="2" type="primary">tad2</name>
    <name type="synonym">34.65</name>
    <name evidence="4" type="ORF">SPO1_193</name>
</gene>
<evidence type="ECO:0000269" key="1">
    <source>
    </source>
</evidence>
<evidence type="ECO:0000303" key="2">
    <source>
    </source>
</evidence>
<evidence type="ECO:0000305" key="3">
    <source>
    </source>
</evidence>
<evidence type="ECO:0000312" key="4">
    <source>
        <dbReference type="EMBL" id="ACI91093.1"/>
    </source>
</evidence>
<evidence type="ECO:0007744" key="5">
    <source>
        <dbReference type="PDB" id="8SME"/>
    </source>
</evidence>
<evidence type="ECO:0007744" key="6">
    <source>
        <dbReference type="PDB" id="8SMF"/>
    </source>
</evidence>
<evidence type="ECO:0007829" key="7">
    <source>
        <dbReference type="PDB" id="8SME"/>
    </source>
</evidence>
<evidence type="ECO:0007829" key="8">
    <source>
        <dbReference type="PDB" id="8SMF"/>
    </source>
</evidence>
<evidence type="ECO:0007829" key="9">
    <source>
        <dbReference type="PDB" id="8WJE"/>
    </source>
</evidence>
<keyword id="KW-0002">3D-structure</keyword>
<keyword id="KW-0479">Metal-binding</keyword>
<keyword id="KW-1185">Reference proteome</keyword>
<proteinExistence type="evidence at protein level"/>